<proteinExistence type="inferred from homology"/>
<sequence>MPSVKVRENEPFEFALRRFKRICEKAGILAETRKREFYEKPTQERKRKAAAAVKRNIRRTSRDVTKRKRLY</sequence>
<comment type="similarity">
    <text evidence="1">Belongs to the bacterial ribosomal protein bS21 family.</text>
</comment>
<feature type="chain" id="PRO_1000120680" description="Small ribosomal subunit protein bS21">
    <location>
        <begin position="1"/>
        <end position="71"/>
    </location>
</feature>
<feature type="region of interest" description="Disordered" evidence="2">
    <location>
        <begin position="40"/>
        <end position="71"/>
    </location>
</feature>
<feature type="compositionally biased region" description="Basic residues" evidence="2">
    <location>
        <begin position="45"/>
        <end position="71"/>
    </location>
</feature>
<protein>
    <recommendedName>
        <fullName evidence="1">Small ribosomal subunit protein bS21</fullName>
    </recommendedName>
    <alternativeName>
        <fullName evidence="3">30S ribosomal protein S21</fullName>
    </alternativeName>
</protein>
<organism>
    <name type="scientific">Xylella fastidiosa (strain M23)</name>
    <dbReference type="NCBI Taxonomy" id="405441"/>
    <lineage>
        <taxon>Bacteria</taxon>
        <taxon>Pseudomonadati</taxon>
        <taxon>Pseudomonadota</taxon>
        <taxon>Gammaproteobacteria</taxon>
        <taxon>Lysobacterales</taxon>
        <taxon>Lysobacteraceae</taxon>
        <taxon>Xylella</taxon>
    </lineage>
</organism>
<keyword id="KW-0687">Ribonucleoprotein</keyword>
<keyword id="KW-0689">Ribosomal protein</keyword>
<reference key="1">
    <citation type="journal article" date="2010" name="J. Bacteriol.">
        <title>Whole genome sequences of two Xylella fastidiosa strains (M12 and M23) causing almond leaf scorch disease in California.</title>
        <authorList>
            <person name="Chen J."/>
            <person name="Xie G."/>
            <person name="Han S."/>
            <person name="Chertkov O."/>
            <person name="Sims D."/>
            <person name="Civerolo E.L."/>
        </authorList>
    </citation>
    <scope>NUCLEOTIDE SEQUENCE [LARGE SCALE GENOMIC DNA]</scope>
    <source>
        <strain>M23</strain>
    </source>
</reference>
<accession>B2I7X5</accession>
<gene>
    <name evidence="1" type="primary">rpsU</name>
    <name type="ordered locus">XfasM23_1736</name>
</gene>
<name>RS21_XYLF2</name>
<dbReference type="EMBL" id="CP001011">
    <property type="protein sequence ID" value="ACB93140.1"/>
    <property type="molecule type" value="Genomic_DNA"/>
</dbReference>
<dbReference type="RefSeq" id="WP_004089809.1">
    <property type="nucleotide sequence ID" value="NC_010577.1"/>
</dbReference>
<dbReference type="SMR" id="B2I7X5"/>
<dbReference type="GeneID" id="93905478"/>
<dbReference type="KEGG" id="xfn:XfasM23_1736"/>
<dbReference type="HOGENOM" id="CLU_159258_1_0_6"/>
<dbReference type="Proteomes" id="UP000001698">
    <property type="component" value="Chromosome"/>
</dbReference>
<dbReference type="GO" id="GO:1990904">
    <property type="term" value="C:ribonucleoprotein complex"/>
    <property type="evidence" value="ECO:0007669"/>
    <property type="project" value="UniProtKB-KW"/>
</dbReference>
<dbReference type="GO" id="GO:0005840">
    <property type="term" value="C:ribosome"/>
    <property type="evidence" value="ECO:0007669"/>
    <property type="project" value="UniProtKB-KW"/>
</dbReference>
<dbReference type="GO" id="GO:0003735">
    <property type="term" value="F:structural constituent of ribosome"/>
    <property type="evidence" value="ECO:0007669"/>
    <property type="project" value="InterPro"/>
</dbReference>
<dbReference type="GO" id="GO:0006412">
    <property type="term" value="P:translation"/>
    <property type="evidence" value="ECO:0007669"/>
    <property type="project" value="UniProtKB-UniRule"/>
</dbReference>
<dbReference type="Gene3D" id="1.20.5.1150">
    <property type="entry name" value="Ribosomal protein S8"/>
    <property type="match status" value="1"/>
</dbReference>
<dbReference type="HAMAP" id="MF_00358">
    <property type="entry name" value="Ribosomal_bS21"/>
    <property type="match status" value="1"/>
</dbReference>
<dbReference type="InterPro" id="IPR001911">
    <property type="entry name" value="Ribosomal_bS21"/>
</dbReference>
<dbReference type="InterPro" id="IPR018278">
    <property type="entry name" value="Ribosomal_bS21_CS"/>
</dbReference>
<dbReference type="InterPro" id="IPR038380">
    <property type="entry name" value="Ribosomal_bS21_sf"/>
</dbReference>
<dbReference type="NCBIfam" id="TIGR00030">
    <property type="entry name" value="S21p"/>
    <property type="match status" value="1"/>
</dbReference>
<dbReference type="PANTHER" id="PTHR21109">
    <property type="entry name" value="MITOCHONDRIAL 28S RIBOSOMAL PROTEIN S21"/>
    <property type="match status" value="1"/>
</dbReference>
<dbReference type="PANTHER" id="PTHR21109:SF22">
    <property type="entry name" value="SMALL RIBOSOMAL SUBUNIT PROTEIN BS21"/>
    <property type="match status" value="1"/>
</dbReference>
<dbReference type="Pfam" id="PF01165">
    <property type="entry name" value="Ribosomal_S21"/>
    <property type="match status" value="1"/>
</dbReference>
<dbReference type="PRINTS" id="PR00976">
    <property type="entry name" value="RIBOSOMALS21"/>
</dbReference>
<dbReference type="PROSITE" id="PS01181">
    <property type="entry name" value="RIBOSOMAL_S21"/>
    <property type="match status" value="1"/>
</dbReference>
<evidence type="ECO:0000255" key="1">
    <source>
        <dbReference type="HAMAP-Rule" id="MF_00358"/>
    </source>
</evidence>
<evidence type="ECO:0000256" key="2">
    <source>
        <dbReference type="SAM" id="MobiDB-lite"/>
    </source>
</evidence>
<evidence type="ECO:0000305" key="3"/>